<proteinExistence type="inferred from homology"/>
<accession>Q8Q0Q0</accession>
<reference key="1">
    <citation type="journal article" date="2002" name="J. Mol. Microbiol. Biotechnol.">
        <title>The genome of Methanosarcina mazei: evidence for lateral gene transfer between Bacteria and Archaea.</title>
        <authorList>
            <person name="Deppenmeier U."/>
            <person name="Johann A."/>
            <person name="Hartsch T."/>
            <person name="Merkl R."/>
            <person name="Schmitz R.A."/>
            <person name="Martinez-Arias R."/>
            <person name="Henne A."/>
            <person name="Wiezer A."/>
            <person name="Baeumer S."/>
            <person name="Jacobi C."/>
            <person name="Brueggemann H."/>
            <person name="Lienard T."/>
            <person name="Christmann A."/>
            <person name="Boemecke M."/>
            <person name="Steckel S."/>
            <person name="Bhattacharyya A."/>
            <person name="Lykidis A."/>
            <person name="Overbeek R."/>
            <person name="Klenk H.-P."/>
            <person name="Gunsalus R.P."/>
            <person name="Fritz H.-J."/>
            <person name="Gottschalk G."/>
        </authorList>
    </citation>
    <scope>NUCLEOTIDE SEQUENCE [LARGE SCALE GENOMIC DNA]</scope>
    <source>
        <strain>ATCC BAA-159 / DSM 3647 / Goe1 / Go1 / JCM 11833 / OCM 88</strain>
    </source>
</reference>
<name>TRM56_METMA</name>
<evidence type="ECO:0000255" key="1">
    <source>
        <dbReference type="HAMAP-Rule" id="MF_00077"/>
    </source>
</evidence>
<comment type="function">
    <text evidence="1">Specifically catalyzes the AdoMet-dependent 2'-O-ribose methylation of cytidine at position 56 in tRNAs.</text>
</comment>
<comment type="catalytic activity">
    <reaction evidence="1">
        <text>cytidine(56) in tRNA + S-adenosyl-L-methionine = 2'-O-methylcytidine(56) in tRNA + S-adenosyl-L-homocysteine + H(+)</text>
        <dbReference type="Rhea" id="RHEA:42968"/>
        <dbReference type="Rhea" id="RHEA-COMP:10308"/>
        <dbReference type="Rhea" id="RHEA-COMP:10309"/>
        <dbReference type="ChEBI" id="CHEBI:15378"/>
        <dbReference type="ChEBI" id="CHEBI:57856"/>
        <dbReference type="ChEBI" id="CHEBI:59789"/>
        <dbReference type="ChEBI" id="CHEBI:74495"/>
        <dbReference type="ChEBI" id="CHEBI:82748"/>
        <dbReference type="EC" id="2.1.1.206"/>
    </reaction>
</comment>
<comment type="subunit">
    <text evidence="1">Homodimer.</text>
</comment>
<comment type="subcellular location">
    <subcellularLocation>
        <location evidence="1">Cytoplasm</location>
    </subcellularLocation>
</comment>
<comment type="similarity">
    <text evidence="1">Belongs to the aTrm56 family.</text>
</comment>
<sequence length="177" mass="19583">MKRIVLLRLGHRPERDKRITTHVGLTARMLGAEGMLLASDDSGIVQSLEDVVRRWGGNFYIKNNVSFKQEIRNWKEGGGKVCHLSMYGVNLPDLADELKKCDKLMIVVGAEKVPPEIYQLADWNVAVGSQPHSEVAAVAITMDRIAEGEPLEKEFPGAELTIVPAERGKHVIENAGE</sequence>
<gene>
    <name type="ordered locus">MM_0086</name>
</gene>
<dbReference type="EC" id="2.1.1.206" evidence="1"/>
<dbReference type="EMBL" id="AE008384">
    <property type="protein sequence ID" value="AAM29782.1"/>
    <property type="molecule type" value="Genomic_DNA"/>
</dbReference>
<dbReference type="RefSeq" id="WP_011032040.1">
    <property type="nucleotide sequence ID" value="NC_003901.1"/>
</dbReference>
<dbReference type="SMR" id="Q8Q0Q0"/>
<dbReference type="KEGG" id="mma:MM_0086"/>
<dbReference type="PATRIC" id="fig|192952.21.peg.99"/>
<dbReference type="eggNOG" id="arCOG01857">
    <property type="taxonomic scope" value="Archaea"/>
</dbReference>
<dbReference type="HOGENOM" id="CLU_123709_0_0_2"/>
<dbReference type="Proteomes" id="UP000000595">
    <property type="component" value="Chromosome"/>
</dbReference>
<dbReference type="GO" id="GO:0005737">
    <property type="term" value="C:cytoplasm"/>
    <property type="evidence" value="ECO:0007669"/>
    <property type="project" value="UniProtKB-SubCell"/>
</dbReference>
<dbReference type="GO" id="GO:0106059">
    <property type="term" value="F:tRNA (cytidine(56)-2'-O)-methyltransferase activity"/>
    <property type="evidence" value="ECO:0007669"/>
    <property type="project" value="UniProtKB-EC"/>
</dbReference>
<dbReference type="GO" id="GO:0002128">
    <property type="term" value="P:tRNA nucleoside ribose methylation"/>
    <property type="evidence" value="ECO:0007669"/>
    <property type="project" value="UniProtKB-UniRule"/>
</dbReference>
<dbReference type="CDD" id="cd18083">
    <property type="entry name" value="aTrm56-like"/>
    <property type="match status" value="1"/>
</dbReference>
<dbReference type="Gene3D" id="3.40.1280.10">
    <property type="match status" value="1"/>
</dbReference>
<dbReference type="HAMAP" id="MF_00077">
    <property type="entry name" value="tRNA_methyltr_aTrm56"/>
    <property type="match status" value="1"/>
</dbReference>
<dbReference type="InterPro" id="IPR029028">
    <property type="entry name" value="Alpha/beta_knot_MTases"/>
</dbReference>
<dbReference type="InterPro" id="IPR029026">
    <property type="entry name" value="tRNA_m1G_MTases_N"/>
</dbReference>
<dbReference type="InterPro" id="IPR002845">
    <property type="entry name" value="tRNA_mtfrase_aTrm56"/>
</dbReference>
<dbReference type="NCBIfam" id="NF003048">
    <property type="entry name" value="PRK03958.1"/>
    <property type="match status" value="1"/>
</dbReference>
<dbReference type="PANTHER" id="PTHR42197">
    <property type="entry name" value="TRNA (CYTIDINE(56)-2'-O)-METHYLTRANSFERASE"/>
    <property type="match status" value="1"/>
</dbReference>
<dbReference type="PANTHER" id="PTHR42197:SF1">
    <property type="entry name" value="TRNA (CYTIDINE(56)-2'-O)-METHYLTRANSFERASE"/>
    <property type="match status" value="1"/>
</dbReference>
<dbReference type="Pfam" id="PF01994">
    <property type="entry name" value="Trm56"/>
    <property type="match status" value="1"/>
</dbReference>
<dbReference type="PIRSF" id="PIRSF016123">
    <property type="entry name" value="UCP016123"/>
    <property type="match status" value="1"/>
</dbReference>
<dbReference type="SUPFAM" id="SSF75217">
    <property type="entry name" value="alpha/beta knot"/>
    <property type="match status" value="1"/>
</dbReference>
<keyword id="KW-0963">Cytoplasm</keyword>
<keyword id="KW-0489">Methyltransferase</keyword>
<keyword id="KW-0949">S-adenosyl-L-methionine</keyword>
<keyword id="KW-0808">Transferase</keyword>
<keyword id="KW-0819">tRNA processing</keyword>
<organism>
    <name type="scientific">Methanosarcina mazei (strain ATCC BAA-159 / DSM 3647 / Goe1 / Go1 / JCM 11833 / OCM 88)</name>
    <name type="common">Methanosarcina frisia</name>
    <dbReference type="NCBI Taxonomy" id="192952"/>
    <lineage>
        <taxon>Archaea</taxon>
        <taxon>Methanobacteriati</taxon>
        <taxon>Methanobacteriota</taxon>
        <taxon>Stenosarchaea group</taxon>
        <taxon>Methanomicrobia</taxon>
        <taxon>Methanosarcinales</taxon>
        <taxon>Methanosarcinaceae</taxon>
        <taxon>Methanosarcina</taxon>
    </lineage>
</organism>
<feature type="chain" id="PRO_0000146931" description="tRNA (cytidine(56)-2'-O)-methyltransferase">
    <location>
        <begin position="1"/>
        <end position="177"/>
    </location>
</feature>
<feature type="binding site" evidence="1">
    <location>
        <position position="84"/>
    </location>
    <ligand>
        <name>S-adenosyl-L-methionine</name>
        <dbReference type="ChEBI" id="CHEBI:59789"/>
    </ligand>
</feature>
<feature type="binding site" evidence="1">
    <location>
        <begin position="109"/>
        <end position="113"/>
    </location>
    <ligand>
        <name>S-adenosyl-L-methionine</name>
        <dbReference type="ChEBI" id="CHEBI:59789"/>
    </ligand>
</feature>
<protein>
    <recommendedName>
        <fullName evidence="1">tRNA (cytidine(56)-2'-O)-methyltransferase</fullName>
        <ecNumber evidence="1">2.1.1.206</ecNumber>
    </recommendedName>
    <alternativeName>
        <fullName evidence="1">tRNA ribose 2'-O-methyltransferase aTrm56</fullName>
    </alternativeName>
</protein>